<feature type="chain" id="PRO_1000216401" description="Tyrosine--tRNA ligase">
    <location>
        <begin position="1"/>
        <end position="361"/>
    </location>
</feature>
<feature type="short sequence motif" description="'KMSKS' region">
    <location>
        <begin position="236"/>
        <end position="240"/>
    </location>
</feature>
<feature type="binding site" evidence="1">
    <location>
        <position position="36"/>
    </location>
    <ligand>
        <name>L-tyrosine</name>
        <dbReference type="ChEBI" id="CHEBI:58315"/>
    </ligand>
</feature>
<feature type="binding site" evidence="1">
    <location>
        <position position="162"/>
    </location>
    <ligand>
        <name>L-tyrosine</name>
        <dbReference type="ChEBI" id="CHEBI:58315"/>
    </ligand>
</feature>
<feature type="binding site" evidence="1">
    <location>
        <position position="166"/>
    </location>
    <ligand>
        <name>L-tyrosine</name>
        <dbReference type="ChEBI" id="CHEBI:58315"/>
    </ligand>
</feature>
<feature type="binding site" evidence="1">
    <location>
        <position position="169"/>
    </location>
    <ligand>
        <name>L-tyrosine</name>
        <dbReference type="ChEBI" id="CHEBI:58315"/>
    </ligand>
</feature>
<feature type="binding site" evidence="1">
    <location>
        <position position="184"/>
    </location>
    <ligand>
        <name>L-tyrosine</name>
        <dbReference type="ChEBI" id="CHEBI:58315"/>
    </ligand>
</feature>
<feature type="binding site" evidence="1">
    <location>
        <position position="239"/>
    </location>
    <ligand>
        <name>ATP</name>
        <dbReference type="ChEBI" id="CHEBI:30616"/>
    </ligand>
</feature>
<dbReference type="EC" id="6.1.1.1" evidence="1"/>
<dbReference type="EMBL" id="CP001402">
    <property type="protein sequence ID" value="ACR42651.1"/>
    <property type="molecule type" value="Genomic_DNA"/>
</dbReference>
<dbReference type="RefSeq" id="WP_012712009.1">
    <property type="nucleotide sequence ID" value="NC_012726.1"/>
</dbReference>
<dbReference type="SMR" id="C4KJ87"/>
<dbReference type="GeneID" id="15298429"/>
<dbReference type="KEGG" id="sid:M164_2049"/>
<dbReference type="HOGENOM" id="CLU_035267_1_1_2"/>
<dbReference type="Proteomes" id="UP000001479">
    <property type="component" value="Chromosome"/>
</dbReference>
<dbReference type="GO" id="GO:0005737">
    <property type="term" value="C:cytoplasm"/>
    <property type="evidence" value="ECO:0007669"/>
    <property type="project" value="UniProtKB-SubCell"/>
</dbReference>
<dbReference type="GO" id="GO:0005524">
    <property type="term" value="F:ATP binding"/>
    <property type="evidence" value="ECO:0007669"/>
    <property type="project" value="UniProtKB-UniRule"/>
</dbReference>
<dbReference type="GO" id="GO:0004831">
    <property type="term" value="F:tyrosine-tRNA ligase activity"/>
    <property type="evidence" value="ECO:0007669"/>
    <property type="project" value="UniProtKB-UniRule"/>
</dbReference>
<dbReference type="GO" id="GO:0006437">
    <property type="term" value="P:tyrosyl-tRNA aminoacylation"/>
    <property type="evidence" value="ECO:0007669"/>
    <property type="project" value="UniProtKB-UniRule"/>
</dbReference>
<dbReference type="CDD" id="cd00805">
    <property type="entry name" value="TyrRS_core"/>
    <property type="match status" value="1"/>
</dbReference>
<dbReference type="Gene3D" id="3.40.50.620">
    <property type="entry name" value="HUPs"/>
    <property type="match status" value="1"/>
</dbReference>
<dbReference type="Gene3D" id="1.10.240.10">
    <property type="entry name" value="Tyrosyl-Transfer RNA Synthetase"/>
    <property type="match status" value="1"/>
</dbReference>
<dbReference type="HAMAP" id="MF_02009">
    <property type="entry name" value="Tyr_tRNA_synth_type4"/>
    <property type="match status" value="1"/>
</dbReference>
<dbReference type="InterPro" id="IPR002305">
    <property type="entry name" value="aa-tRNA-synth_Ic"/>
</dbReference>
<dbReference type="InterPro" id="IPR014729">
    <property type="entry name" value="Rossmann-like_a/b/a_fold"/>
</dbReference>
<dbReference type="InterPro" id="IPR002307">
    <property type="entry name" value="Tyr-tRNA-ligase"/>
</dbReference>
<dbReference type="InterPro" id="IPR023678">
    <property type="entry name" value="Tyr-tRNA-ligase_4"/>
</dbReference>
<dbReference type="InterPro" id="IPR023617">
    <property type="entry name" value="Tyr-tRNA-ligase_arc/euk-type"/>
</dbReference>
<dbReference type="InterPro" id="IPR050489">
    <property type="entry name" value="Tyr-tRNA_synthase"/>
</dbReference>
<dbReference type="NCBIfam" id="NF006330">
    <property type="entry name" value="PRK08560.1"/>
    <property type="match status" value="1"/>
</dbReference>
<dbReference type="NCBIfam" id="TIGR00234">
    <property type="entry name" value="tyrS"/>
    <property type="match status" value="1"/>
</dbReference>
<dbReference type="PANTHER" id="PTHR46264:SF4">
    <property type="entry name" value="TYROSINE--TRNA LIGASE, CYTOPLASMIC"/>
    <property type="match status" value="1"/>
</dbReference>
<dbReference type="PANTHER" id="PTHR46264">
    <property type="entry name" value="TYROSINE-TRNA LIGASE"/>
    <property type="match status" value="1"/>
</dbReference>
<dbReference type="Pfam" id="PF00579">
    <property type="entry name" value="tRNA-synt_1b"/>
    <property type="match status" value="1"/>
</dbReference>
<dbReference type="PIRSF" id="PIRSF006588">
    <property type="entry name" value="TyrRS_arch_euk"/>
    <property type="match status" value="1"/>
</dbReference>
<dbReference type="PRINTS" id="PR01040">
    <property type="entry name" value="TRNASYNTHTYR"/>
</dbReference>
<dbReference type="SUPFAM" id="SSF52374">
    <property type="entry name" value="Nucleotidylyl transferase"/>
    <property type="match status" value="1"/>
</dbReference>
<gene>
    <name evidence="1" type="primary">tyrS</name>
    <name type="ordered locus">M164_2049</name>
</gene>
<organism>
    <name type="scientific">Saccharolobus islandicus (strain M.16.4 / Kamchatka #3)</name>
    <name type="common">Sulfolobus islandicus</name>
    <dbReference type="NCBI Taxonomy" id="426118"/>
    <lineage>
        <taxon>Archaea</taxon>
        <taxon>Thermoproteota</taxon>
        <taxon>Thermoprotei</taxon>
        <taxon>Sulfolobales</taxon>
        <taxon>Sulfolobaceae</taxon>
        <taxon>Saccharolobus</taxon>
    </lineage>
</organism>
<reference key="1">
    <citation type="journal article" date="2009" name="Proc. Natl. Acad. Sci. U.S.A.">
        <title>Biogeography of the Sulfolobus islandicus pan-genome.</title>
        <authorList>
            <person name="Reno M.L."/>
            <person name="Held N.L."/>
            <person name="Fields C.J."/>
            <person name="Burke P.V."/>
            <person name="Whitaker R.J."/>
        </authorList>
    </citation>
    <scope>NUCLEOTIDE SEQUENCE [LARGE SCALE GENOMIC DNA]</scope>
    <source>
        <strain>M.16.4 / Kamchatka #3</strain>
    </source>
</reference>
<keyword id="KW-0030">Aminoacyl-tRNA synthetase</keyword>
<keyword id="KW-0067">ATP-binding</keyword>
<keyword id="KW-0963">Cytoplasm</keyword>
<keyword id="KW-0436">Ligase</keyword>
<keyword id="KW-0547">Nucleotide-binding</keyword>
<keyword id="KW-0648">Protein biosynthesis</keyword>
<proteinExistence type="inferred from homology"/>
<comment type="function">
    <text evidence="1">Catalyzes the attachment of tyrosine to tRNA(Tyr) in a two-step reaction: tyrosine is first activated by ATP to form Tyr-AMP and then transferred to the acceptor end of tRNA(Tyr).</text>
</comment>
<comment type="catalytic activity">
    <reaction evidence="1">
        <text>tRNA(Tyr) + L-tyrosine + ATP = L-tyrosyl-tRNA(Tyr) + AMP + diphosphate + H(+)</text>
        <dbReference type="Rhea" id="RHEA:10220"/>
        <dbReference type="Rhea" id="RHEA-COMP:9706"/>
        <dbReference type="Rhea" id="RHEA-COMP:9707"/>
        <dbReference type="ChEBI" id="CHEBI:15378"/>
        <dbReference type="ChEBI" id="CHEBI:30616"/>
        <dbReference type="ChEBI" id="CHEBI:33019"/>
        <dbReference type="ChEBI" id="CHEBI:58315"/>
        <dbReference type="ChEBI" id="CHEBI:78442"/>
        <dbReference type="ChEBI" id="CHEBI:78536"/>
        <dbReference type="ChEBI" id="CHEBI:456215"/>
        <dbReference type="EC" id="6.1.1.1"/>
    </reaction>
</comment>
<comment type="subunit">
    <text evidence="1">Homodimer.</text>
</comment>
<comment type="subcellular location">
    <subcellularLocation>
        <location evidence="1">Cytoplasm</location>
    </subcellularLocation>
</comment>
<comment type="similarity">
    <text evidence="1">Belongs to the class-I aminoacyl-tRNA synthetase family. TyrS type 4 subfamily.</text>
</comment>
<sequence>MSIDQRLQLITRNAAEIITIDELRKKLESEEKLKGYIGFEPSGLFHIGWLIWTQKVKDLVEAGVNMTLLRATWHAWINDKLGGDLSLIKMAADYTVEVIKNYGVDTTKLNIVDADDMVKEKDYWALVIKVAKNSSLARIKRALTIMGRRAEEAEIDASKLIYPAMQVSDIFYLDLDIALGGTDQRKAHMLARDVAEKMGKKKIVSIHTPLLVGLQGGQRMSITEGMEEDDIQAEIKMSKSKPESAIFVSDSREDVERKIMGAYCPKGVAENNPILQILKYIIFPRYNFVKIERDIRYGGDVEFKDYEELERAYIEGKIHPMDLKKATARRLNEILEPIRKSLERKPEFEEMIQKISKSVTR</sequence>
<protein>
    <recommendedName>
        <fullName evidence="1">Tyrosine--tRNA ligase</fullName>
        <ecNumber evidence="1">6.1.1.1</ecNumber>
    </recommendedName>
    <alternativeName>
        <fullName evidence="1">Tyrosyl-tRNA synthetase</fullName>
        <shortName evidence="1">TyrRS</shortName>
    </alternativeName>
</protein>
<evidence type="ECO:0000255" key="1">
    <source>
        <dbReference type="HAMAP-Rule" id="MF_02009"/>
    </source>
</evidence>
<name>SYY_SACI6</name>
<accession>C4KJ87</accession>